<name>PURL_HELHP</name>
<protein>
    <recommendedName>
        <fullName evidence="1">Phosphoribosylformylglycinamidine synthase subunit PurL</fullName>
        <shortName evidence="1">FGAM synthase</shortName>
        <ecNumber evidence="1">6.3.5.3</ecNumber>
    </recommendedName>
    <alternativeName>
        <fullName evidence="1">Formylglycinamide ribonucleotide amidotransferase subunit II</fullName>
        <shortName evidence="1">FGAR amidotransferase II</shortName>
        <shortName evidence="1">FGAR-AT II</shortName>
    </alternativeName>
    <alternativeName>
        <fullName evidence="1">Glutamine amidotransferase PurL</fullName>
    </alternativeName>
    <alternativeName>
        <fullName evidence="1">Phosphoribosylformylglycinamidine synthase subunit II</fullName>
    </alternativeName>
</protein>
<sequence>MTNITHLLGEIKDIDETLKVHKLSKQDYEEILKILKRPPNLIELGIFAAMWSEHCSYKSSKKYLNGFPTKAPWVVQGPGENAGIIDIGENLCAVFKIESHNHPSFIEPHAGAATGVGGIMRDIFTMGARPVASLNSIRFGDISDNGTLGKKHRYLLRGVVEGIGSYGNCMGVPTIGGEMSFESCYNGNILVNAFCLGLVKKDEIFYGKAEGIGNPVIYVGSKTGRDGLGGAVMSSDSFSSTSKAVRSAVQVGDPFAEKLLLEACLELFKQDLIVGIQDMGAAGLTSSSFEMAGRSGSGMTLYLDKVPMREEGMNPYELMLSESQERMLICAKKGCEQQVLDIFAKWEVDAAIIGEVTKSGIMELFWYGEKCAEIPIAQLSENAPMLDMPLRPVAVQTHKANQLKTSQSAQEIFITLLGSVEVANKRWVYSQYDSSVQSNTITPAGSGDASMIRIKGTNSALSMSVDCNMRYCYLDPKNGAKIAVATSGRNSIVNGAKPLAISDCLNFGSPHNPEVMWAFKEVCQGIKESCKVLNTPVVSGNVSLHNQSDGVDIYPTPSIVSVGLIDDVSKVVSSTFQTQGNMLVLLGEIKAEFGGSLAQKILEGHIYGQIPSIDLTQEFALWNLMLEASDECMLSAAKDIGEGGLAITLAKMALGNGECQPIGCNVHTHLPSQLLFAPSQSCIIVEVAGEHLNTLKQKAKQHKIAFTEIGCVGGDIFCVDEINISLEEMKKLYFESFEKLIAQDL</sequence>
<keyword id="KW-0067">ATP-binding</keyword>
<keyword id="KW-0963">Cytoplasm</keyword>
<keyword id="KW-0436">Ligase</keyword>
<keyword id="KW-0460">Magnesium</keyword>
<keyword id="KW-0479">Metal-binding</keyword>
<keyword id="KW-0547">Nucleotide-binding</keyword>
<keyword id="KW-0658">Purine biosynthesis</keyword>
<keyword id="KW-1185">Reference proteome</keyword>
<organism>
    <name type="scientific">Helicobacter hepaticus (strain ATCC 51449 / 3B1)</name>
    <dbReference type="NCBI Taxonomy" id="235279"/>
    <lineage>
        <taxon>Bacteria</taxon>
        <taxon>Pseudomonadati</taxon>
        <taxon>Campylobacterota</taxon>
        <taxon>Epsilonproteobacteria</taxon>
        <taxon>Campylobacterales</taxon>
        <taxon>Helicobacteraceae</taxon>
        <taxon>Helicobacter</taxon>
    </lineage>
</organism>
<feature type="chain" id="PRO_0000100458" description="Phosphoribosylformylglycinamidine synthase subunit PurL">
    <location>
        <begin position="1"/>
        <end position="745"/>
    </location>
</feature>
<feature type="active site" evidence="1">
    <location>
        <position position="54"/>
    </location>
</feature>
<feature type="active site" description="Proton acceptor" evidence="1">
    <location>
        <position position="100"/>
    </location>
</feature>
<feature type="binding site" evidence="1">
    <location>
        <position position="57"/>
    </location>
    <ligand>
        <name>ATP</name>
        <dbReference type="ChEBI" id="CHEBI:30616"/>
    </ligand>
</feature>
<feature type="binding site" evidence="1">
    <location>
        <position position="96"/>
    </location>
    <ligand>
        <name>ATP</name>
        <dbReference type="ChEBI" id="CHEBI:30616"/>
    </ligand>
</feature>
<feature type="binding site" evidence="1">
    <location>
        <position position="98"/>
    </location>
    <ligand>
        <name>Mg(2+)</name>
        <dbReference type="ChEBI" id="CHEBI:18420"/>
        <label>1</label>
    </ligand>
</feature>
<feature type="binding site" evidence="1">
    <location>
        <begin position="99"/>
        <end position="102"/>
    </location>
    <ligand>
        <name>substrate</name>
    </ligand>
</feature>
<feature type="binding site" evidence="1">
    <location>
        <position position="121"/>
    </location>
    <ligand>
        <name>substrate</name>
    </ligand>
</feature>
<feature type="binding site" evidence="1">
    <location>
        <position position="122"/>
    </location>
    <ligand>
        <name>Mg(2+)</name>
        <dbReference type="ChEBI" id="CHEBI:18420"/>
        <label>2</label>
    </ligand>
</feature>
<feature type="binding site" evidence="1">
    <location>
        <position position="250"/>
    </location>
    <ligand>
        <name>substrate</name>
    </ligand>
</feature>
<feature type="binding site" evidence="1">
    <location>
        <position position="278"/>
    </location>
    <ligand>
        <name>Mg(2+)</name>
        <dbReference type="ChEBI" id="CHEBI:18420"/>
        <label>2</label>
    </ligand>
</feature>
<feature type="binding site" evidence="1">
    <location>
        <begin position="322"/>
        <end position="324"/>
    </location>
    <ligand>
        <name>substrate</name>
    </ligand>
</feature>
<feature type="binding site" evidence="1">
    <location>
        <position position="503"/>
    </location>
    <ligand>
        <name>ATP</name>
        <dbReference type="ChEBI" id="CHEBI:30616"/>
    </ligand>
</feature>
<feature type="binding site" evidence="1">
    <location>
        <position position="540"/>
    </location>
    <ligand>
        <name>ATP</name>
        <dbReference type="ChEBI" id="CHEBI:30616"/>
    </ligand>
</feature>
<feature type="binding site" evidence="1">
    <location>
        <position position="541"/>
    </location>
    <ligand>
        <name>Mg(2+)</name>
        <dbReference type="ChEBI" id="CHEBI:18420"/>
        <label>1</label>
    </ligand>
</feature>
<feature type="binding site" evidence="1">
    <location>
        <position position="543"/>
    </location>
    <ligand>
        <name>substrate</name>
    </ligand>
</feature>
<accession>Q7VF52</accession>
<dbReference type="EC" id="6.3.5.3" evidence="1"/>
<dbReference type="EMBL" id="AE017125">
    <property type="protein sequence ID" value="AAP78422.1"/>
    <property type="molecule type" value="Genomic_DNA"/>
</dbReference>
<dbReference type="RefSeq" id="WP_011116664.1">
    <property type="nucleotide sequence ID" value="NC_004917.1"/>
</dbReference>
<dbReference type="SMR" id="Q7VF52"/>
<dbReference type="STRING" id="235279.HH_1825"/>
<dbReference type="KEGG" id="hhe:HH_1825"/>
<dbReference type="eggNOG" id="COG0046">
    <property type="taxonomic scope" value="Bacteria"/>
</dbReference>
<dbReference type="HOGENOM" id="CLU_003100_0_1_7"/>
<dbReference type="OrthoDB" id="9804441at2"/>
<dbReference type="UniPathway" id="UPA00074">
    <property type="reaction ID" value="UER00128"/>
</dbReference>
<dbReference type="Proteomes" id="UP000002495">
    <property type="component" value="Chromosome"/>
</dbReference>
<dbReference type="GO" id="GO:0005737">
    <property type="term" value="C:cytoplasm"/>
    <property type="evidence" value="ECO:0007669"/>
    <property type="project" value="UniProtKB-SubCell"/>
</dbReference>
<dbReference type="GO" id="GO:0005524">
    <property type="term" value="F:ATP binding"/>
    <property type="evidence" value="ECO:0007669"/>
    <property type="project" value="UniProtKB-UniRule"/>
</dbReference>
<dbReference type="GO" id="GO:0000287">
    <property type="term" value="F:magnesium ion binding"/>
    <property type="evidence" value="ECO:0007669"/>
    <property type="project" value="UniProtKB-UniRule"/>
</dbReference>
<dbReference type="GO" id="GO:0004642">
    <property type="term" value="F:phosphoribosylformylglycinamidine synthase activity"/>
    <property type="evidence" value="ECO:0007669"/>
    <property type="project" value="UniProtKB-UniRule"/>
</dbReference>
<dbReference type="GO" id="GO:0006189">
    <property type="term" value="P:'de novo' IMP biosynthetic process"/>
    <property type="evidence" value="ECO:0007669"/>
    <property type="project" value="UniProtKB-UniRule"/>
</dbReference>
<dbReference type="CDD" id="cd02203">
    <property type="entry name" value="PurL_repeat1"/>
    <property type="match status" value="1"/>
</dbReference>
<dbReference type="CDD" id="cd02204">
    <property type="entry name" value="PurL_repeat2"/>
    <property type="match status" value="1"/>
</dbReference>
<dbReference type="FunFam" id="3.30.1330.10:FF:000004">
    <property type="entry name" value="Phosphoribosylformylglycinamidine synthase subunit PurL"/>
    <property type="match status" value="1"/>
</dbReference>
<dbReference type="Gene3D" id="3.90.650.10">
    <property type="entry name" value="PurM-like C-terminal domain"/>
    <property type="match status" value="2"/>
</dbReference>
<dbReference type="Gene3D" id="3.30.1330.10">
    <property type="entry name" value="PurM-like, N-terminal domain"/>
    <property type="match status" value="2"/>
</dbReference>
<dbReference type="HAMAP" id="MF_00420">
    <property type="entry name" value="PurL_2"/>
    <property type="match status" value="1"/>
</dbReference>
<dbReference type="InterPro" id="IPR010074">
    <property type="entry name" value="PRibForGlyAmidine_synth_PurL"/>
</dbReference>
<dbReference type="InterPro" id="IPR041609">
    <property type="entry name" value="PurL_linker"/>
</dbReference>
<dbReference type="InterPro" id="IPR010918">
    <property type="entry name" value="PurM-like_C_dom"/>
</dbReference>
<dbReference type="InterPro" id="IPR036676">
    <property type="entry name" value="PurM-like_C_sf"/>
</dbReference>
<dbReference type="InterPro" id="IPR016188">
    <property type="entry name" value="PurM-like_N"/>
</dbReference>
<dbReference type="InterPro" id="IPR036921">
    <property type="entry name" value="PurM-like_N_sf"/>
</dbReference>
<dbReference type="NCBIfam" id="TIGR01736">
    <property type="entry name" value="FGAM_synth_II"/>
    <property type="match status" value="1"/>
</dbReference>
<dbReference type="NCBIfam" id="NF002290">
    <property type="entry name" value="PRK01213.1"/>
    <property type="match status" value="1"/>
</dbReference>
<dbReference type="PANTHER" id="PTHR43555">
    <property type="entry name" value="PHOSPHORIBOSYLFORMYLGLYCINAMIDINE SYNTHASE SUBUNIT PURL"/>
    <property type="match status" value="1"/>
</dbReference>
<dbReference type="PANTHER" id="PTHR43555:SF1">
    <property type="entry name" value="PHOSPHORIBOSYLFORMYLGLYCINAMIDINE SYNTHASE SUBUNIT PURL"/>
    <property type="match status" value="1"/>
</dbReference>
<dbReference type="Pfam" id="PF00586">
    <property type="entry name" value="AIRS"/>
    <property type="match status" value="2"/>
</dbReference>
<dbReference type="Pfam" id="PF02769">
    <property type="entry name" value="AIRS_C"/>
    <property type="match status" value="2"/>
</dbReference>
<dbReference type="Pfam" id="PF18072">
    <property type="entry name" value="FGAR-AT_linker"/>
    <property type="match status" value="1"/>
</dbReference>
<dbReference type="PIRSF" id="PIRSF001587">
    <property type="entry name" value="FGAM_synthase_II"/>
    <property type="match status" value="1"/>
</dbReference>
<dbReference type="SUPFAM" id="SSF56042">
    <property type="entry name" value="PurM C-terminal domain-like"/>
    <property type="match status" value="2"/>
</dbReference>
<dbReference type="SUPFAM" id="SSF55326">
    <property type="entry name" value="PurM N-terminal domain-like"/>
    <property type="match status" value="2"/>
</dbReference>
<evidence type="ECO:0000255" key="1">
    <source>
        <dbReference type="HAMAP-Rule" id="MF_00420"/>
    </source>
</evidence>
<gene>
    <name evidence="1" type="primary">purL</name>
    <name type="ordered locus">HH_1825</name>
</gene>
<comment type="function">
    <text evidence="1">Part of the phosphoribosylformylglycinamidine synthase complex involved in the purines biosynthetic pathway. Catalyzes the ATP-dependent conversion of formylglycinamide ribonucleotide (FGAR) and glutamine to yield formylglycinamidine ribonucleotide (FGAM) and glutamate. The FGAM synthase complex is composed of three subunits. PurQ produces an ammonia molecule by converting glutamine to glutamate. PurL transfers the ammonia molecule to FGAR to form FGAM in an ATP-dependent manner. PurS interacts with PurQ and PurL and is thought to assist in the transfer of the ammonia molecule from PurQ to PurL.</text>
</comment>
<comment type="catalytic activity">
    <reaction evidence="1">
        <text>N(2)-formyl-N(1)-(5-phospho-beta-D-ribosyl)glycinamide + L-glutamine + ATP + H2O = 2-formamido-N(1)-(5-O-phospho-beta-D-ribosyl)acetamidine + L-glutamate + ADP + phosphate + H(+)</text>
        <dbReference type="Rhea" id="RHEA:17129"/>
        <dbReference type="ChEBI" id="CHEBI:15377"/>
        <dbReference type="ChEBI" id="CHEBI:15378"/>
        <dbReference type="ChEBI" id="CHEBI:29985"/>
        <dbReference type="ChEBI" id="CHEBI:30616"/>
        <dbReference type="ChEBI" id="CHEBI:43474"/>
        <dbReference type="ChEBI" id="CHEBI:58359"/>
        <dbReference type="ChEBI" id="CHEBI:147286"/>
        <dbReference type="ChEBI" id="CHEBI:147287"/>
        <dbReference type="ChEBI" id="CHEBI:456216"/>
        <dbReference type="EC" id="6.3.5.3"/>
    </reaction>
</comment>
<comment type="pathway">
    <text evidence="1">Purine metabolism; IMP biosynthesis via de novo pathway; 5-amino-1-(5-phospho-D-ribosyl)imidazole from N(2)-formyl-N(1)-(5-phospho-D-ribosyl)glycinamide: step 1/2.</text>
</comment>
<comment type="subunit">
    <text evidence="1">Monomer. Part of the FGAM synthase complex composed of 1 PurL, 1 PurQ and 2 PurS subunits.</text>
</comment>
<comment type="subcellular location">
    <subcellularLocation>
        <location evidence="1">Cytoplasm</location>
    </subcellularLocation>
</comment>
<comment type="similarity">
    <text evidence="1">Belongs to the FGAMS family.</text>
</comment>
<reference key="1">
    <citation type="journal article" date="2003" name="Proc. Natl. Acad. Sci. U.S.A.">
        <title>The complete genome sequence of the carcinogenic bacterium Helicobacter hepaticus.</title>
        <authorList>
            <person name="Suerbaum S."/>
            <person name="Josenhans C."/>
            <person name="Sterzenbach T."/>
            <person name="Drescher B."/>
            <person name="Brandt P."/>
            <person name="Bell M."/>
            <person name="Droege M."/>
            <person name="Fartmann B."/>
            <person name="Fischer H.-P."/>
            <person name="Ge Z."/>
            <person name="Hoerster A."/>
            <person name="Holland R."/>
            <person name="Klein K."/>
            <person name="Koenig J."/>
            <person name="Macko L."/>
            <person name="Mendz G.L."/>
            <person name="Nyakatura G."/>
            <person name="Schauer D.B."/>
            <person name="Shen Z."/>
            <person name="Weber J."/>
            <person name="Frosch M."/>
            <person name="Fox J.G."/>
        </authorList>
    </citation>
    <scope>NUCLEOTIDE SEQUENCE [LARGE SCALE GENOMIC DNA]</scope>
    <source>
        <strain>ATCC 51449 / 3B1</strain>
    </source>
</reference>
<proteinExistence type="inferred from homology"/>